<accession>Q4G176</accession>
<accession>A8K4J8</accession>
<accession>C9JQL6</accession>
<accession>Q6INA0</accession>
<accession>Q8N2F7</accession>
<comment type="function">
    <text evidence="4 5 6">Catalyzes the initial reaction in intramitochondrial fatty acid synthesis, by activating malonate and methylmalonate, but not acetate, into their respective CoA thioester (PubMed:21841779, PubMed:21846720). May have some preference toward very-long-chain substrates (PubMed:17762044).</text>
</comment>
<comment type="catalytic activity">
    <reaction evidence="4">
        <text>tetracosanoate + ATP + CoA = tetracosanoyl-CoA + AMP + diphosphate</text>
        <dbReference type="Rhea" id="RHEA:33639"/>
        <dbReference type="ChEBI" id="CHEBI:30616"/>
        <dbReference type="ChEBI" id="CHEBI:31014"/>
        <dbReference type="ChEBI" id="CHEBI:33019"/>
        <dbReference type="ChEBI" id="CHEBI:57287"/>
        <dbReference type="ChEBI" id="CHEBI:65052"/>
        <dbReference type="ChEBI" id="CHEBI:456215"/>
    </reaction>
    <physiologicalReaction direction="left-to-right" evidence="4">
        <dbReference type="Rhea" id="RHEA:33640"/>
    </physiologicalReaction>
</comment>
<comment type="catalytic activity">
    <reaction evidence="6">
        <text>malonate + ATP + CoA = malonyl-CoA + AMP + diphosphate</text>
        <dbReference type="Rhea" id="RHEA:32139"/>
        <dbReference type="ChEBI" id="CHEBI:15792"/>
        <dbReference type="ChEBI" id="CHEBI:30616"/>
        <dbReference type="ChEBI" id="CHEBI:33019"/>
        <dbReference type="ChEBI" id="CHEBI:57287"/>
        <dbReference type="ChEBI" id="CHEBI:57384"/>
        <dbReference type="ChEBI" id="CHEBI:456215"/>
        <dbReference type="EC" id="6.2.1.76"/>
    </reaction>
    <physiologicalReaction direction="left-to-right" evidence="6">
        <dbReference type="Rhea" id="RHEA:32140"/>
    </physiologicalReaction>
</comment>
<comment type="biophysicochemical properties">
    <kinetics>
        <KM evidence="6">36.8 uM for malonate</KM>
    </kinetics>
</comment>
<comment type="interaction">
    <interactant intactId="EBI-10714818">
        <id>Q4G176</id>
    </interactant>
    <interactant intactId="EBI-10189448">
        <id>Q9BQ13</id>
        <label>KCTD14</label>
    </interactant>
    <organismsDiffer>false</organismsDiffer>
    <experiments>2</experiments>
</comment>
<comment type="interaction">
    <interactant intactId="EBI-10714818">
        <id>Q4G176</id>
    </interactant>
    <interactant intactId="EBI-10171697">
        <id>Q6A162</id>
        <label>KRT40</label>
    </interactant>
    <organismsDiffer>false</organismsDiffer>
    <experiments>3</experiments>
</comment>
<comment type="interaction">
    <interactant intactId="EBI-10714818">
        <id>Q4G176</id>
    </interactant>
    <interactant intactId="EBI-12072296">
        <id>O95460-2</id>
        <label>MATN4</label>
    </interactant>
    <organismsDiffer>false</organismsDiffer>
    <experiments>3</experiments>
</comment>
<comment type="interaction">
    <interactant intactId="EBI-10714818">
        <id>Q4G176</id>
    </interactant>
    <interactant intactId="EBI-1105153">
        <id>Q96KQ4</id>
        <label>PPP1R13B</label>
    </interactant>
    <organismsDiffer>false</organismsDiffer>
    <experiments>3</experiments>
</comment>
<comment type="interaction">
    <interactant intactId="EBI-10714818">
        <id>Q4G176</id>
    </interactant>
    <interactant intactId="EBI-11898753">
        <id>P51157</id>
        <label>RAB28</label>
    </interactant>
    <organismsDiffer>false</organismsDiffer>
    <experiments>3</experiments>
</comment>
<comment type="interaction">
    <interactant intactId="EBI-10714818">
        <id>Q4G176</id>
    </interactant>
    <interactant intactId="EBI-719493">
        <id>P14373</id>
        <label>TRIM27</label>
    </interactant>
    <organismsDiffer>false</organismsDiffer>
    <experiments>3</experiments>
</comment>
<comment type="subcellular location">
    <subcellularLocation>
        <location evidence="5 6">Mitochondrion</location>
    </subcellularLocation>
</comment>
<comment type="disease" evidence="5">
    <disease id="DI-03246">
        <name>Combined malonic and methylmalonic aciduria</name>
        <acronym>CMAMMA</acronym>
        <description>A metabolic disease characterized by malonic and methylmalonic aciduria, with urinary excretion of much larger amounts of methylmalonic acid than malonic acid, in the presence of normal malonyl-CoA decarboxylase activity. Clinical features include coma, ketoacidosis, hypoglycemia, failure to thrive, microcephaly, dystonia, axial hypotonia and/or developmental delay, and neurologic manifestations including seizures, psychiatric disease and/or cognitive decline.</description>
        <dbReference type="MIM" id="614265"/>
    </disease>
    <text>The disease is caused by variants affecting the gene represented in this entry.</text>
</comment>
<comment type="similarity">
    <text evidence="7">Belongs to the ATP-dependent AMP-binding enzyme family.</text>
</comment>
<comment type="sequence caution" evidence="7">
    <conflict type="miscellaneous discrepancy">
        <sequence resource="EMBL-CDS" id="AAH72391"/>
    </conflict>
    <text>Aberrant splicing.</text>
</comment>
<name>ACSF3_HUMAN</name>
<dbReference type="EC" id="6.2.1.76" evidence="6"/>
<dbReference type="EMBL" id="AK075499">
    <property type="protein sequence ID" value="BAC11654.1"/>
    <property type="molecule type" value="mRNA"/>
</dbReference>
<dbReference type="EMBL" id="AK290963">
    <property type="protein sequence ID" value="BAF83652.1"/>
    <property type="molecule type" value="mRNA"/>
</dbReference>
<dbReference type="EMBL" id="AC009113">
    <property type="status" value="NOT_ANNOTATED_CDS"/>
    <property type="molecule type" value="Genomic_DNA"/>
</dbReference>
<dbReference type="EMBL" id="AC135782">
    <property type="status" value="NOT_ANNOTATED_CDS"/>
    <property type="molecule type" value="Genomic_DNA"/>
</dbReference>
<dbReference type="EMBL" id="CH471184">
    <property type="protein sequence ID" value="EAW66744.1"/>
    <property type="molecule type" value="Genomic_DNA"/>
</dbReference>
<dbReference type="EMBL" id="BC028399">
    <property type="protein sequence ID" value="AAH28399.1"/>
    <property type="molecule type" value="mRNA"/>
</dbReference>
<dbReference type="EMBL" id="BC072391">
    <property type="protein sequence ID" value="AAH72391.1"/>
    <property type="status" value="ALT_SEQ"/>
    <property type="molecule type" value="mRNA"/>
</dbReference>
<dbReference type="CCDS" id="CCDS10974.1"/>
<dbReference type="RefSeq" id="NP_001120686.1">
    <property type="nucleotide sequence ID" value="NM_001127214.4"/>
</dbReference>
<dbReference type="RefSeq" id="NP_001230208.1">
    <property type="nucleotide sequence ID" value="NM_001243279.3"/>
</dbReference>
<dbReference type="RefSeq" id="NP_777577.2">
    <property type="nucleotide sequence ID" value="NM_174917.5"/>
</dbReference>
<dbReference type="SMR" id="Q4G176"/>
<dbReference type="BioGRID" id="128248">
    <property type="interactions" value="87"/>
</dbReference>
<dbReference type="FunCoup" id="Q4G176">
    <property type="interactions" value="1690"/>
</dbReference>
<dbReference type="IntAct" id="Q4G176">
    <property type="interactions" value="46"/>
</dbReference>
<dbReference type="STRING" id="9606.ENSP00000479130"/>
<dbReference type="ChEMBL" id="CHEMBL4523315"/>
<dbReference type="SwissLipids" id="SLP:000000541"/>
<dbReference type="GlyGen" id="Q4G176">
    <property type="glycosylation" value="2 sites, 1 O-linked glycan (1 site)"/>
</dbReference>
<dbReference type="iPTMnet" id="Q4G176"/>
<dbReference type="PhosphoSitePlus" id="Q4G176"/>
<dbReference type="SwissPalm" id="Q4G176"/>
<dbReference type="BioMuta" id="ACSF3"/>
<dbReference type="DMDM" id="296439438"/>
<dbReference type="jPOST" id="Q4G176"/>
<dbReference type="MassIVE" id="Q4G176"/>
<dbReference type="PaxDb" id="9606-ENSP00000479130"/>
<dbReference type="PeptideAtlas" id="Q4G176"/>
<dbReference type="ProteomicsDB" id="62157"/>
<dbReference type="Pumba" id="Q4G176"/>
<dbReference type="Antibodypedia" id="2033">
    <property type="antibodies" value="108 antibodies from 19 providers"/>
</dbReference>
<dbReference type="DNASU" id="197322"/>
<dbReference type="Ensembl" id="ENST00000317447.9">
    <property type="protein sequence ID" value="ENSP00000320646.4"/>
    <property type="gene ID" value="ENSG00000176715.17"/>
</dbReference>
<dbReference type="Ensembl" id="ENST00000406948.7">
    <property type="protein sequence ID" value="ENSP00000384627.3"/>
    <property type="gene ID" value="ENSG00000176715.17"/>
</dbReference>
<dbReference type="Ensembl" id="ENST00000614302.5">
    <property type="protein sequence ID" value="ENSP00000479130.1"/>
    <property type="gene ID" value="ENSG00000176715.17"/>
</dbReference>
<dbReference type="GeneID" id="197322"/>
<dbReference type="KEGG" id="hsa:197322"/>
<dbReference type="MANE-Select" id="ENST00000614302.5">
    <property type="protein sequence ID" value="ENSP00000479130.1"/>
    <property type="RefSeq nucleotide sequence ID" value="NM_001243279.3"/>
    <property type="RefSeq protein sequence ID" value="NP_001230208.1"/>
</dbReference>
<dbReference type="UCSC" id="uc002fmp.5">
    <property type="organism name" value="human"/>
</dbReference>
<dbReference type="AGR" id="HGNC:27288"/>
<dbReference type="CTD" id="197322"/>
<dbReference type="DisGeNET" id="197322"/>
<dbReference type="GeneCards" id="ACSF3"/>
<dbReference type="HGNC" id="HGNC:27288">
    <property type="gene designation" value="ACSF3"/>
</dbReference>
<dbReference type="HPA" id="ENSG00000176715">
    <property type="expression patterns" value="Low tissue specificity"/>
</dbReference>
<dbReference type="MalaCards" id="ACSF3"/>
<dbReference type="MIM" id="614245">
    <property type="type" value="gene"/>
</dbReference>
<dbReference type="MIM" id="614265">
    <property type="type" value="phenotype"/>
</dbReference>
<dbReference type="neXtProt" id="NX_Q4G176"/>
<dbReference type="OpenTargets" id="ENSG00000176715"/>
<dbReference type="Orphanet" id="289504">
    <property type="disease" value="Combined malonic and methylmalonic acidemia"/>
</dbReference>
<dbReference type="PharmGKB" id="PA162375375"/>
<dbReference type="VEuPathDB" id="HostDB:ENSG00000176715"/>
<dbReference type="eggNOG" id="KOG1176">
    <property type="taxonomic scope" value="Eukaryota"/>
</dbReference>
<dbReference type="GeneTree" id="ENSGT00940000157000"/>
<dbReference type="InParanoid" id="Q4G176"/>
<dbReference type="OMA" id="KGKWFKT"/>
<dbReference type="OrthoDB" id="2962993at2759"/>
<dbReference type="PAN-GO" id="Q4G176">
    <property type="GO annotations" value="3 GO annotations based on evolutionary models"/>
</dbReference>
<dbReference type="PhylomeDB" id="Q4G176"/>
<dbReference type="TreeFam" id="TF312995"/>
<dbReference type="BioCyc" id="MetaCyc:ENSG00000176715-MONOMER"/>
<dbReference type="PathwayCommons" id="Q4G176"/>
<dbReference type="Reactome" id="R-HSA-75876">
    <property type="pathway name" value="Synthesis of very long-chain fatty acyl-CoAs"/>
</dbReference>
<dbReference type="SignaLink" id="Q4G176"/>
<dbReference type="BioGRID-ORCS" id="197322">
    <property type="hits" value="10 hits in 1164 CRISPR screens"/>
</dbReference>
<dbReference type="ChiTaRS" id="ACSF3">
    <property type="organism name" value="human"/>
</dbReference>
<dbReference type="GeneWiki" id="ACSF3"/>
<dbReference type="GenomeRNAi" id="197322"/>
<dbReference type="Pharos" id="Q4G176">
    <property type="development level" value="Tbio"/>
</dbReference>
<dbReference type="PRO" id="PR:Q4G176"/>
<dbReference type="Proteomes" id="UP000005640">
    <property type="component" value="Chromosome 16"/>
</dbReference>
<dbReference type="RNAct" id="Q4G176">
    <property type="molecule type" value="protein"/>
</dbReference>
<dbReference type="Bgee" id="ENSG00000176715">
    <property type="expression patterns" value="Expressed in mucosa of transverse colon and 106 other cell types or tissues"/>
</dbReference>
<dbReference type="ExpressionAtlas" id="Q4G176">
    <property type="expression patterns" value="baseline and differential"/>
</dbReference>
<dbReference type="GO" id="GO:0005759">
    <property type="term" value="C:mitochondrial matrix"/>
    <property type="evidence" value="ECO:0000304"/>
    <property type="project" value="Reactome"/>
</dbReference>
<dbReference type="GO" id="GO:0005739">
    <property type="term" value="C:mitochondrion"/>
    <property type="evidence" value="ECO:0000314"/>
    <property type="project" value="UniProtKB"/>
</dbReference>
<dbReference type="GO" id="GO:0016878">
    <property type="term" value="F:acid-thiol ligase activity"/>
    <property type="evidence" value="ECO:0000314"/>
    <property type="project" value="UniProtKB"/>
</dbReference>
<dbReference type="GO" id="GO:0005524">
    <property type="term" value="F:ATP binding"/>
    <property type="evidence" value="ECO:0007669"/>
    <property type="project" value="UniProtKB-KW"/>
</dbReference>
<dbReference type="GO" id="GO:0016405">
    <property type="term" value="F:CoA-ligase activity"/>
    <property type="evidence" value="ECO:0000318"/>
    <property type="project" value="GO_Central"/>
</dbReference>
<dbReference type="GO" id="GO:0090409">
    <property type="term" value="F:malonyl-CoA synthetase activity"/>
    <property type="evidence" value="ECO:0000314"/>
    <property type="project" value="UniProtKB"/>
</dbReference>
<dbReference type="GO" id="GO:0031957">
    <property type="term" value="F:very long-chain fatty acid-CoA ligase activity"/>
    <property type="evidence" value="ECO:0000304"/>
    <property type="project" value="Reactome"/>
</dbReference>
<dbReference type="GO" id="GO:0006633">
    <property type="term" value="P:fatty acid biosynthetic process"/>
    <property type="evidence" value="ECO:0000314"/>
    <property type="project" value="UniProtKB"/>
</dbReference>
<dbReference type="GO" id="GO:0006631">
    <property type="term" value="P:fatty acid metabolic process"/>
    <property type="evidence" value="ECO:0000314"/>
    <property type="project" value="UniProtKB"/>
</dbReference>
<dbReference type="GO" id="GO:0035338">
    <property type="term" value="P:long-chain fatty-acyl-CoA biosynthetic process"/>
    <property type="evidence" value="ECO:0000304"/>
    <property type="project" value="Reactome"/>
</dbReference>
<dbReference type="GO" id="GO:0090410">
    <property type="term" value="P:malonate catabolic process"/>
    <property type="evidence" value="ECO:0000314"/>
    <property type="project" value="UniProtKB"/>
</dbReference>
<dbReference type="CDD" id="cd05941">
    <property type="entry name" value="MCS"/>
    <property type="match status" value="1"/>
</dbReference>
<dbReference type="FunFam" id="3.30.300.30:FF:000031">
    <property type="entry name" value="Acyl-CoA synthetase family member 3"/>
    <property type="match status" value="1"/>
</dbReference>
<dbReference type="FunFam" id="3.40.50.12780:FF:000030">
    <property type="entry name" value="Acyl-CoA synthetase family member 3"/>
    <property type="match status" value="1"/>
</dbReference>
<dbReference type="Gene3D" id="3.30.300.30">
    <property type="match status" value="1"/>
</dbReference>
<dbReference type="Gene3D" id="3.40.50.12780">
    <property type="entry name" value="N-terminal domain of ligase-like"/>
    <property type="match status" value="1"/>
</dbReference>
<dbReference type="InterPro" id="IPR025110">
    <property type="entry name" value="AMP-bd_C"/>
</dbReference>
<dbReference type="InterPro" id="IPR045851">
    <property type="entry name" value="AMP-bd_C_sf"/>
</dbReference>
<dbReference type="InterPro" id="IPR020845">
    <property type="entry name" value="AMP-binding_CS"/>
</dbReference>
<dbReference type="InterPro" id="IPR000873">
    <property type="entry name" value="AMP-dep_synth/lig_dom"/>
</dbReference>
<dbReference type="InterPro" id="IPR042099">
    <property type="entry name" value="ANL_N_sf"/>
</dbReference>
<dbReference type="PANTHER" id="PTHR43201">
    <property type="entry name" value="ACYL-COA SYNTHETASE"/>
    <property type="match status" value="1"/>
</dbReference>
<dbReference type="PANTHER" id="PTHR43201:SF8">
    <property type="entry name" value="ACYL-COA SYNTHETASE FAMILY MEMBER 3"/>
    <property type="match status" value="1"/>
</dbReference>
<dbReference type="Pfam" id="PF00501">
    <property type="entry name" value="AMP-binding"/>
    <property type="match status" value="1"/>
</dbReference>
<dbReference type="Pfam" id="PF13193">
    <property type="entry name" value="AMP-binding_C"/>
    <property type="match status" value="1"/>
</dbReference>
<dbReference type="SUPFAM" id="SSF56801">
    <property type="entry name" value="Acetyl-CoA synthetase-like"/>
    <property type="match status" value="1"/>
</dbReference>
<dbReference type="PROSITE" id="PS00455">
    <property type="entry name" value="AMP_BINDING"/>
    <property type="match status" value="1"/>
</dbReference>
<feature type="transit peptide" description="Mitochondrion" evidence="2">
    <location>
        <begin position="1"/>
        <end position="83"/>
    </location>
</feature>
<feature type="chain" id="PRO_0000315800" description="Malonate--CoA ligase ACSF3, mitochondrial">
    <location>
        <begin position="84"/>
        <end position="576"/>
    </location>
</feature>
<feature type="binding site" evidence="1">
    <location>
        <begin position="202"/>
        <end position="210"/>
    </location>
    <ligand>
        <name>ATP</name>
        <dbReference type="ChEBI" id="CHEBI:30616"/>
    </ligand>
</feature>
<feature type="binding site" evidence="1">
    <location>
        <position position="457"/>
    </location>
    <ligand>
        <name>ATP</name>
        <dbReference type="ChEBI" id="CHEBI:30616"/>
    </ligand>
</feature>
<feature type="binding site" evidence="1">
    <location>
        <position position="471"/>
    </location>
    <ligand>
        <name>ATP</name>
        <dbReference type="ChEBI" id="CHEBI:30616"/>
    </ligand>
</feature>
<feature type="binding site" evidence="1">
    <location>
        <position position="563"/>
    </location>
    <ligand>
        <name>ATP</name>
        <dbReference type="ChEBI" id="CHEBI:30616"/>
    </ligand>
</feature>
<feature type="sequence variant" id="VAR_038306" description="In dbSNP:rs7188200." evidence="3">
    <original>L</original>
    <variation>P</variation>
    <location>
        <position position="2"/>
    </location>
</feature>
<feature type="sequence variant" id="VAR_038307" description="In dbSNP:rs11547019." evidence="3">
    <original>A</original>
    <variation>P</variation>
    <location>
        <position position="17"/>
    </location>
</feature>
<feature type="sequence variant" id="VAR_066504" description="In CMAMMA; dbSNP:rs387907121." evidence="5">
    <original>M</original>
    <variation>R</variation>
    <location>
        <position position="198"/>
    </location>
</feature>
<feature type="sequence variant" id="VAR_066505" description="In CMAMMA; dbSNP:rs140986055." evidence="5">
    <original>P</original>
    <variation>L</variation>
    <location>
        <position position="243"/>
    </location>
</feature>
<feature type="sequence variant" id="VAR_066506" description="In CMAMMA; dbSNP:rs387907120." evidence="5">
    <original>T</original>
    <variation>I</variation>
    <location>
        <position position="358"/>
    </location>
</feature>
<feature type="sequence variant" id="VAR_066507" description="In CMAMMA; dbSNP:rs150487794." evidence="5">
    <original>E</original>
    <variation>K</variation>
    <location>
        <position position="359"/>
    </location>
</feature>
<feature type="sequence variant" id="VAR_038308" description="In dbSNP:rs3743979." evidence="3">
    <original>V</original>
    <variation>M</variation>
    <location>
        <position position="372"/>
    </location>
</feature>
<feature type="sequence variant" id="VAR_066508" description="In CMAMMA; dbSNP:rs1362504214." evidence="5">
    <original>K</original>
    <variation>T</variation>
    <location>
        <position position="462"/>
    </location>
</feature>
<feature type="sequence variant" id="VAR_066509" description="In CMAMMA." evidence="5">
    <location>
        <begin position="465"/>
        <end position="470"/>
    </location>
</feature>
<feature type="sequence variant" id="VAR_066510" description="In CMAMMA; dbSNP:rs387907119." evidence="5">
    <original>R</original>
    <variation>Q</variation>
    <location>
        <position position="471"/>
    </location>
</feature>
<feature type="sequence variant" id="VAR_066511" description="In CMAMMA; dbSNP:rs138680796." evidence="5">
    <original>R</original>
    <variation>W</variation>
    <location>
        <position position="471"/>
    </location>
</feature>
<feature type="sequence variant" id="VAR_066512" description="In CMAMMA." evidence="5">
    <original>G</original>
    <variation>S</variation>
    <location>
        <position position="480"/>
    </location>
</feature>
<feature type="sequence variant" id="VAR_066513" description="In CMAMMA; dbSNP:rs141090143." evidence="5">
    <original>R</original>
    <variation>W</variation>
    <location>
        <position position="558"/>
    </location>
</feature>
<feature type="mutagenesis site" description="Impairs malonyl-CoA synthase activity." evidence="6">
    <original>R</original>
    <variation>A</variation>
    <location>
        <position position="354"/>
    </location>
</feature>
<feature type="mutagenesis site" description="Impairs malonyl-CoA synthase activity." evidence="6">
    <original>R</original>
    <variation>L</variation>
    <location>
        <position position="354"/>
    </location>
</feature>
<feature type="sequence conflict" description="In Ref. 5; AAH28399." evidence="7" ref="5">
    <original>A</original>
    <variation>V</variation>
    <location>
        <position position="148"/>
    </location>
</feature>
<feature type="sequence conflict" description="In Ref. 2; BAC11654." evidence="7" ref="2">
    <original>K</original>
    <variation>E</variation>
    <location>
        <position position="278"/>
    </location>
</feature>
<reference key="1">
    <citation type="journal article" date="2004" name="Nat. Genet.">
        <title>Complete sequencing and characterization of 21,243 full-length human cDNAs.</title>
        <authorList>
            <person name="Ota T."/>
            <person name="Suzuki Y."/>
            <person name="Nishikawa T."/>
            <person name="Otsuki T."/>
            <person name="Sugiyama T."/>
            <person name="Irie R."/>
            <person name="Wakamatsu A."/>
            <person name="Hayashi K."/>
            <person name="Sato H."/>
            <person name="Nagai K."/>
            <person name="Kimura K."/>
            <person name="Makita H."/>
            <person name="Sekine M."/>
            <person name="Obayashi M."/>
            <person name="Nishi T."/>
            <person name="Shibahara T."/>
            <person name="Tanaka T."/>
            <person name="Ishii S."/>
            <person name="Yamamoto J."/>
            <person name="Saito K."/>
            <person name="Kawai Y."/>
            <person name="Isono Y."/>
            <person name="Nakamura Y."/>
            <person name="Nagahari K."/>
            <person name="Murakami K."/>
            <person name="Yasuda T."/>
            <person name="Iwayanagi T."/>
            <person name="Wagatsuma M."/>
            <person name="Shiratori A."/>
            <person name="Sudo H."/>
            <person name="Hosoiri T."/>
            <person name="Kaku Y."/>
            <person name="Kodaira H."/>
            <person name="Kondo H."/>
            <person name="Sugawara M."/>
            <person name="Takahashi M."/>
            <person name="Kanda K."/>
            <person name="Yokoi T."/>
            <person name="Furuya T."/>
            <person name="Kikkawa E."/>
            <person name="Omura Y."/>
            <person name="Abe K."/>
            <person name="Kamihara K."/>
            <person name="Katsuta N."/>
            <person name="Sato K."/>
            <person name="Tanikawa M."/>
            <person name="Yamazaki M."/>
            <person name="Ninomiya K."/>
            <person name="Ishibashi T."/>
            <person name="Yamashita H."/>
            <person name="Murakawa K."/>
            <person name="Fujimori K."/>
            <person name="Tanai H."/>
            <person name="Kimata M."/>
            <person name="Watanabe M."/>
            <person name="Hiraoka S."/>
            <person name="Chiba Y."/>
            <person name="Ishida S."/>
            <person name="Ono Y."/>
            <person name="Takiguchi S."/>
            <person name="Watanabe S."/>
            <person name="Yosida M."/>
            <person name="Hotuta T."/>
            <person name="Kusano J."/>
            <person name="Kanehori K."/>
            <person name="Takahashi-Fujii A."/>
            <person name="Hara H."/>
            <person name="Tanase T.-O."/>
            <person name="Nomura Y."/>
            <person name="Togiya S."/>
            <person name="Komai F."/>
            <person name="Hara R."/>
            <person name="Takeuchi K."/>
            <person name="Arita M."/>
            <person name="Imose N."/>
            <person name="Musashino K."/>
            <person name="Yuuki H."/>
            <person name="Oshima A."/>
            <person name="Sasaki N."/>
            <person name="Aotsuka S."/>
            <person name="Yoshikawa Y."/>
            <person name="Matsunawa H."/>
            <person name="Ichihara T."/>
            <person name="Shiohata N."/>
            <person name="Sano S."/>
            <person name="Moriya S."/>
            <person name="Momiyama H."/>
            <person name="Satoh N."/>
            <person name="Takami S."/>
            <person name="Terashima Y."/>
            <person name="Suzuki O."/>
            <person name="Nakagawa S."/>
            <person name="Senoh A."/>
            <person name="Mizoguchi H."/>
            <person name="Goto Y."/>
            <person name="Shimizu F."/>
            <person name="Wakebe H."/>
            <person name="Hishigaki H."/>
            <person name="Watanabe T."/>
            <person name="Sugiyama A."/>
            <person name="Takemoto M."/>
            <person name="Kawakami B."/>
            <person name="Yamazaki M."/>
            <person name="Watanabe K."/>
            <person name="Kumagai A."/>
            <person name="Itakura S."/>
            <person name="Fukuzumi Y."/>
            <person name="Fujimori Y."/>
            <person name="Komiyama M."/>
            <person name="Tashiro H."/>
            <person name="Tanigami A."/>
            <person name="Fujiwara T."/>
            <person name="Ono T."/>
            <person name="Yamada K."/>
            <person name="Fujii Y."/>
            <person name="Ozaki K."/>
            <person name="Hirao M."/>
            <person name="Ohmori Y."/>
            <person name="Kawabata A."/>
            <person name="Hikiji T."/>
            <person name="Kobatake N."/>
            <person name="Inagaki H."/>
            <person name="Ikema Y."/>
            <person name="Okamoto S."/>
            <person name="Okitani R."/>
            <person name="Kawakami T."/>
            <person name="Noguchi S."/>
            <person name="Itoh T."/>
            <person name="Shigeta K."/>
            <person name="Senba T."/>
            <person name="Matsumura K."/>
            <person name="Nakajima Y."/>
            <person name="Mizuno T."/>
            <person name="Morinaga M."/>
            <person name="Sasaki M."/>
            <person name="Togashi T."/>
            <person name="Oyama M."/>
            <person name="Hata H."/>
            <person name="Watanabe M."/>
            <person name="Komatsu T."/>
            <person name="Mizushima-Sugano J."/>
            <person name="Satoh T."/>
            <person name="Shirai Y."/>
            <person name="Takahashi Y."/>
            <person name="Nakagawa K."/>
            <person name="Okumura K."/>
            <person name="Nagase T."/>
            <person name="Nomura N."/>
            <person name="Kikuchi H."/>
            <person name="Masuho Y."/>
            <person name="Yamashita R."/>
            <person name="Nakai K."/>
            <person name="Yada T."/>
            <person name="Nakamura Y."/>
            <person name="Ohara O."/>
            <person name="Isogai T."/>
            <person name="Sugano S."/>
        </authorList>
    </citation>
    <scope>NUCLEOTIDE SEQUENCE [LARGE SCALE MRNA]</scope>
</reference>
<reference key="2">
    <citation type="journal article" date="2005" name="DNA Res.">
        <title>Signal sequence and keyword trap in silico for selection of full-length human cDNAs encoding secretion or membrane proteins from oligo-capped cDNA libraries.</title>
        <authorList>
            <person name="Otsuki T."/>
            <person name="Ota T."/>
            <person name="Nishikawa T."/>
            <person name="Hayashi K."/>
            <person name="Suzuki Y."/>
            <person name="Yamamoto J."/>
            <person name="Wakamatsu A."/>
            <person name="Kimura K."/>
            <person name="Sakamoto K."/>
            <person name="Hatano N."/>
            <person name="Kawai Y."/>
            <person name="Ishii S."/>
            <person name="Saito K."/>
            <person name="Kojima S."/>
            <person name="Sugiyama T."/>
            <person name="Ono T."/>
            <person name="Okano K."/>
            <person name="Yoshikawa Y."/>
            <person name="Aotsuka S."/>
            <person name="Sasaki N."/>
            <person name="Hattori A."/>
            <person name="Okumura K."/>
            <person name="Nagai K."/>
            <person name="Sugano S."/>
            <person name="Isogai T."/>
        </authorList>
    </citation>
    <scope>NUCLEOTIDE SEQUENCE [LARGE SCALE MRNA]</scope>
    <source>
        <tissue>Embryo</tissue>
    </source>
</reference>
<reference key="3">
    <citation type="journal article" date="2004" name="Nature">
        <title>The sequence and analysis of duplication-rich human chromosome 16.</title>
        <authorList>
            <person name="Martin J."/>
            <person name="Han C."/>
            <person name="Gordon L.A."/>
            <person name="Terry A."/>
            <person name="Prabhakar S."/>
            <person name="She X."/>
            <person name="Xie G."/>
            <person name="Hellsten U."/>
            <person name="Chan Y.M."/>
            <person name="Altherr M."/>
            <person name="Couronne O."/>
            <person name="Aerts A."/>
            <person name="Bajorek E."/>
            <person name="Black S."/>
            <person name="Blumer H."/>
            <person name="Branscomb E."/>
            <person name="Brown N.C."/>
            <person name="Bruno W.J."/>
            <person name="Buckingham J.M."/>
            <person name="Callen D.F."/>
            <person name="Campbell C.S."/>
            <person name="Campbell M.L."/>
            <person name="Campbell E.W."/>
            <person name="Caoile C."/>
            <person name="Challacombe J.F."/>
            <person name="Chasteen L.A."/>
            <person name="Chertkov O."/>
            <person name="Chi H.C."/>
            <person name="Christensen M."/>
            <person name="Clark L.M."/>
            <person name="Cohn J.D."/>
            <person name="Denys M."/>
            <person name="Detter J.C."/>
            <person name="Dickson M."/>
            <person name="Dimitrijevic-Bussod M."/>
            <person name="Escobar J."/>
            <person name="Fawcett J.J."/>
            <person name="Flowers D."/>
            <person name="Fotopulos D."/>
            <person name="Glavina T."/>
            <person name="Gomez M."/>
            <person name="Gonzales E."/>
            <person name="Goodstein D."/>
            <person name="Goodwin L.A."/>
            <person name="Grady D.L."/>
            <person name="Grigoriev I."/>
            <person name="Groza M."/>
            <person name="Hammon N."/>
            <person name="Hawkins T."/>
            <person name="Haydu L."/>
            <person name="Hildebrand C.E."/>
            <person name="Huang W."/>
            <person name="Israni S."/>
            <person name="Jett J."/>
            <person name="Jewett P.B."/>
            <person name="Kadner K."/>
            <person name="Kimball H."/>
            <person name="Kobayashi A."/>
            <person name="Krawczyk M.-C."/>
            <person name="Leyba T."/>
            <person name="Longmire J.L."/>
            <person name="Lopez F."/>
            <person name="Lou Y."/>
            <person name="Lowry S."/>
            <person name="Ludeman T."/>
            <person name="Manohar C.F."/>
            <person name="Mark G.A."/>
            <person name="McMurray K.L."/>
            <person name="Meincke L.J."/>
            <person name="Morgan J."/>
            <person name="Moyzis R.K."/>
            <person name="Mundt M.O."/>
            <person name="Munk A.C."/>
            <person name="Nandkeshwar R.D."/>
            <person name="Pitluck S."/>
            <person name="Pollard M."/>
            <person name="Predki P."/>
            <person name="Parson-Quintana B."/>
            <person name="Ramirez L."/>
            <person name="Rash S."/>
            <person name="Retterer J."/>
            <person name="Ricke D.O."/>
            <person name="Robinson D.L."/>
            <person name="Rodriguez A."/>
            <person name="Salamov A."/>
            <person name="Saunders E.H."/>
            <person name="Scott D."/>
            <person name="Shough T."/>
            <person name="Stallings R.L."/>
            <person name="Stalvey M."/>
            <person name="Sutherland R.D."/>
            <person name="Tapia R."/>
            <person name="Tesmer J.G."/>
            <person name="Thayer N."/>
            <person name="Thompson L.S."/>
            <person name="Tice H."/>
            <person name="Torney D.C."/>
            <person name="Tran-Gyamfi M."/>
            <person name="Tsai M."/>
            <person name="Ulanovsky L.E."/>
            <person name="Ustaszewska A."/>
            <person name="Vo N."/>
            <person name="White P.S."/>
            <person name="Williams A.L."/>
            <person name="Wills P.L."/>
            <person name="Wu J.-R."/>
            <person name="Wu K."/>
            <person name="Yang J."/>
            <person name="DeJong P."/>
            <person name="Bruce D."/>
            <person name="Doggett N.A."/>
            <person name="Deaven L."/>
            <person name="Schmutz J."/>
            <person name="Grimwood J."/>
            <person name="Richardson P."/>
            <person name="Rokhsar D.S."/>
            <person name="Eichler E.E."/>
            <person name="Gilna P."/>
            <person name="Lucas S.M."/>
            <person name="Myers R.M."/>
            <person name="Rubin E.M."/>
            <person name="Pennacchio L.A."/>
        </authorList>
    </citation>
    <scope>NUCLEOTIDE SEQUENCE [LARGE SCALE GENOMIC DNA]</scope>
</reference>
<reference key="4">
    <citation type="submission" date="2005-09" db="EMBL/GenBank/DDBJ databases">
        <authorList>
            <person name="Mural R.J."/>
            <person name="Istrail S."/>
            <person name="Sutton G.G."/>
            <person name="Florea L."/>
            <person name="Halpern A.L."/>
            <person name="Mobarry C.M."/>
            <person name="Lippert R."/>
            <person name="Walenz B."/>
            <person name="Shatkay H."/>
            <person name="Dew I."/>
            <person name="Miller J.R."/>
            <person name="Flanigan M.J."/>
            <person name="Edwards N.J."/>
            <person name="Bolanos R."/>
            <person name="Fasulo D."/>
            <person name="Halldorsson B.V."/>
            <person name="Hannenhalli S."/>
            <person name="Turner R."/>
            <person name="Yooseph S."/>
            <person name="Lu F."/>
            <person name="Nusskern D.R."/>
            <person name="Shue B.C."/>
            <person name="Zheng X.H."/>
            <person name="Zhong F."/>
            <person name="Delcher A.L."/>
            <person name="Huson D.H."/>
            <person name="Kravitz S.A."/>
            <person name="Mouchard L."/>
            <person name="Reinert K."/>
            <person name="Remington K.A."/>
            <person name="Clark A.G."/>
            <person name="Waterman M.S."/>
            <person name="Eichler E.E."/>
            <person name="Adams M.D."/>
            <person name="Hunkapiller M.W."/>
            <person name="Myers E.W."/>
            <person name="Venter J.C."/>
        </authorList>
    </citation>
    <scope>NUCLEOTIDE SEQUENCE [LARGE SCALE GENOMIC DNA]</scope>
</reference>
<reference key="5">
    <citation type="journal article" date="2004" name="Genome Res.">
        <title>The status, quality, and expansion of the NIH full-length cDNA project: the Mammalian Gene Collection (MGC).</title>
        <authorList>
            <consortium name="The MGC Project Team"/>
        </authorList>
    </citation>
    <scope>NUCLEOTIDE SEQUENCE [LARGE SCALE MRNA]</scope>
    <scope>VARIANTS PRO-2; PRO-17 AND MET-372</scope>
    <source>
        <tissue>Brain</tissue>
    </source>
</reference>
<reference key="6">
    <citation type="journal article" date="2007" name="J. Lipid Res.">
        <title>Evidence for 26 distinct acyl-coenzyme A synthetase genes in the human genome.</title>
        <authorList>
            <person name="Watkins P.A."/>
            <person name="Maiguel D."/>
            <person name="Jia Z."/>
            <person name="Pevsner J."/>
        </authorList>
    </citation>
    <scope>FUNCTION</scope>
    <scope>CATALYTIC ACTIVITY</scope>
</reference>
<reference key="7">
    <citation type="journal article" date="2011" name="BMC Syst. Biol.">
        <title>Initial characterization of the human central proteome.</title>
        <authorList>
            <person name="Burkard T.R."/>
            <person name="Planyavsky M."/>
            <person name="Kaupe I."/>
            <person name="Breitwieser F.P."/>
            <person name="Buerckstuemmer T."/>
            <person name="Bennett K.L."/>
            <person name="Superti-Furga G."/>
            <person name="Colinge J."/>
        </authorList>
    </citation>
    <scope>IDENTIFICATION BY MASS SPECTROMETRY [LARGE SCALE ANALYSIS]</scope>
</reference>
<reference key="8">
    <citation type="journal article" date="2011" name="J. Biol. Chem.">
        <title>Mammalian ACSF3 protein is a malonyl-CoA synthetase that supplies the chain extender units for mitochondrial fatty acid synthesis.</title>
        <authorList>
            <person name="Witkowski A."/>
            <person name="Thweatt J."/>
            <person name="Smith S."/>
        </authorList>
    </citation>
    <scope>CATALYTIC ACTIVITY</scope>
    <scope>FUNCTION</scope>
    <scope>BIOPHYSICOCHEMICAL PROPERTIES</scope>
    <scope>SUBCELLULAR LOCATION</scope>
    <scope>MUTAGENESIS OF ARG-354</scope>
</reference>
<reference key="9">
    <citation type="journal article" date="2015" name="Proteomics">
        <title>N-terminome analysis of the human mitochondrial proteome.</title>
        <authorList>
            <person name="Vaca Jacome A.S."/>
            <person name="Rabilloud T."/>
            <person name="Schaeffer-Reiss C."/>
            <person name="Rompais M."/>
            <person name="Ayoub D."/>
            <person name="Lane L."/>
            <person name="Bairoch A."/>
            <person name="Van Dorsselaer A."/>
            <person name="Carapito C."/>
        </authorList>
    </citation>
    <scope>IDENTIFICATION BY MASS SPECTROMETRY [LARGE SCALE ANALYSIS]</scope>
</reference>
<reference key="10">
    <citation type="journal article" date="2011" name="Nat. Genet.">
        <title>Exome sequencing identifies ACSF3 as a cause of combined malonic and methylmalonic aciduria.</title>
        <authorList>
            <person name="Sloan J.L."/>
            <person name="Johnston J.J."/>
            <person name="Manoli I."/>
            <person name="Chandler R.J."/>
            <person name="Krause C."/>
            <person name="Carrillo-Carrasco N."/>
            <person name="Chandrasekaran S.D."/>
            <person name="Sysol J.R."/>
            <person name="O'Brien K."/>
            <person name="Hauser N.S."/>
            <person name="Sapp J.C."/>
            <person name="Dorward H.M."/>
            <person name="Huizing M."/>
            <person name="Barshop B.A."/>
            <person name="Berry S.A."/>
            <person name="James P.M."/>
            <person name="Champaigne N.L."/>
            <person name="de Lonlay P."/>
            <person name="Valayannopoulos V."/>
            <person name="Geschwind M.D."/>
            <person name="Gavrilov D.K."/>
            <person name="Nyhan W.L."/>
            <person name="Biesecker L.G."/>
            <person name="Venditti C.P."/>
        </authorList>
    </citation>
    <scope>VARIANTS CMAMMA ARG-198; LEU-243; ILE-358; LYS-359; THR-462; 465-GLN--GLY-470 DEL; GLN-471; TRP-471; SER-480 AND TRP-558</scope>
    <scope>FUNCTION</scope>
    <scope>SUBCELLULAR LOCATION</scope>
</reference>
<organism>
    <name type="scientific">Homo sapiens</name>
    <name type="common">Human</name>
    <dbReference type="NCBI Taxonomy" id="9606"/>
    <lineage>
        <taxon>Eukaryota</taxon>
        <taxon>Metazoa</taxon>
        <taxon>Chordata</taxon>
        <taxon>Craniata</taxon>
        <taxon>Vertebrata</taxon>
        <taxon>Euteleostomi</taxon>
        <taxon>Mammalia</taxon>
        <taxon>Eutheria</taxon>
        <taxon>Euarchontoglires</taxon>
        <taxon>Primates</taxon>
        <taxon>Haplorrhini</taxon>
        <taxon>Catarrhini</taxon>
        <taxon>Hominidae</taxon>
        <taxon>Homo</taxon>
    </lineage>
</organism>
<proteinExistence type="evidence at protein level"/>
<gene>
    <name evidence="8" type="primary">ACSF3</name>
    <name type="ORF">PSEC0197</name>
</gene>
<sequence length="576" mass="64130">MLPHVVLTFRRLGCALASCRLAPARHRGSGLLHTAPVARSDRSAPVFTRALAFGDRIALVDQHGRHTYRELYSRSLRLSQEICRLCGCVGGDLREERVSFLCANDASYVVAQWASWMSGGVAVPLYRKHPAAQLEYVICDSQSSVVLASQEYLELLSPVVRKLGVPLLPLTPAIYTGAVEEPAEVPVPEQGWRNKGAMIIYTSGTTGRPKGVLSTHQNIRAVVTGLVHKWAWTKDDVILHVLPLHHVHGVVNALLCPLWVGATCVMMPEFSPQQVWEKFLSSETPRINVFMAVPTIYTKLMEYYDRHFTQPHAQDFLRAVCEEKIRLMVSGSAALPLPVLEKWKNITGHTLLERYGMTEIGMALSGPLTTAVRLPGSVGTPLPGVQVRIVSENPQREACSYTIHAEGDERGTKVTPGFEEKEGELLVRGPSVFREYWNKPEETKSAFTLDGWFKTGDTVVFKDGQYWIRGRTSVDIIKTGGYKVSALEVEWHLLAHPSITDVAVIGVPDMTWGQRVTAVVTLREGHSLSHRELKEWARNVLAPYAVPSELVLVEEIPRNQMGKIDKKALIRHFHPS</sequence>
<protein>
    <recommendedName>
        <fullName evidence="7">Malonate--CoA ligase ACSF3, mitochondrial</fullName>
        <ecNumber evidence="6">6.2.1.76</ecNumber>
    </recommendedName>
    <alternativeName>
        <fullName>Acyl-CoA synthetase family member 3</fullName>
    </alternativeName>
</protein>
<evidence type="ECO:0000250" key="1"/>
<evidence type="ECO:0000255" key="2"/>
<evidence type="ECO:0000269" key="3">
    <source>
    </source>
</evidence>
<evidence type="ECO:0000269" key="4">
    <source>
    </source>
</evidence>
<evidence type="ECO:0000269" key="5">
    <source>
    </source>
</evidence>
<evidence type="ECO:0000269" key="6">
    <source>
    </source>
</evidence>
<evidence type="ECO:0000305" key="7"/>
<evidence type="ECO:0000312" key="8">
    <source>
        <dbReference type="HGNC" id="HGNC:27288"/>
    </source>
</evidence>
<keyword id="KW-0067">ATP-binding</keyword>
<keyword id="KW-0276">Fatty acid metabolism</keyword>
<keyword id="KW-0436">Ligase</keyword>
<keyword id="KW-0443">Lipid metabolism</keyword>
<keyword id="KW-0496">Mitochondrion</keyword>
<keyword id="KW-0547">Nucleotide-binding</keyword>
<keyword id="KW-1267">Proteomics identification</keyword>
<keyword id="KW-1185">Reference proteome</keyword>
<keyword id="KW-0809">Transit peptide</keyword>